<keyword id="KW-0002">3D-structure</keyword>
<keyword id="KW-0167">Capsid protein</keyword>
<keyword id="KW-1185">Reference proteome</keyword>
<keyword id="KW-1142">T=3 icosahedral capsid protein</keyword>
<keyword id="KW-0946">Virion</keyword>
<accession>Q91D83</accession>
<proteinExistence type="evidence at protein level"/>
<protein>
    <recommendedName>
        <fullName>Capsid protein alpha</fullName>
    </recommendedName>
</protein>
<gene>
    <name type="primary">alpha</name>
</gene>
<dbReference type="EMBL" id="AB056572">
    <property type="protein sequence ID" value="BAB64331.1"/>
    <property type="molecule type" value="Genomic_RNA"/>
</dbReference>
<dbReference type="RefSeq" id="NP_599249.1">
    <property type="nucleotide sequence ID" value="NC_003449.1"/>
</dbReference>
<dbReference type="PDB" id="6RJ0">
    <property type="method" value="EM"/>
    <property type="resolution" value="3.70 A"/>
    <property type="chains" value="A/B/C=2-340"/>
</dbReference>
<dbReference type="PDBsum" id="6RJ0"/>
<dbReference type="SMR" id="Q91D83"/>
<dbReference type="KEGG" id="vg:991146"/>
<dbReference type="OrthoDB" id="5675at10239"/>
<dbReference type="Proteomes" id="UP000000414">
    <property type="component" value="Genome"/>
</dbReference>
<dbReference type="GO" id="GO:0039617">
    <property type="term" value="C:T=3 icosahedral viral capsid"/>
    <property type="evidence" value="ECO:0007669"/>
    <property type="project" value="UniProtKB-KW"/>
</dbReference>
<dbReference type="Gene3D" id="2.60.120.20">
    <property type="match status" value="1"/>
</dbReference>
<dbReference type="InterPro" id="IPR024292">
    <property type="entry name" value="Nodavirus_capsid"/>
</dbReference>
<dbReference type="InterPro" id="IPR029053">
    <property type="entry name" value="Viral_coat"/>
</dbReference>
<dbReference type="Pfam" id="PF11729">
    <property type="entry name" value="Capsid-VNN"/>
    <property type="match status" value="1"/>
</dbReference>
<dbReference type="SUPFAM" id="SSF88633">
    <property type="entry name" value="Positive stranded ssRNA viruses"/>
    <property type="match status" value="1"/>
</dbReference>
<evidence type="ECO:0000250" key="1"/>
<evidence type="ECO:0000256" key="2">
    <source>
        <dbReference type="SAM" id="MobiDB-lite"/>
    </source>
</evidence>
<evidence type="ECO:0000305" key="3"/>
<organism>
    <name type="scientific">Striped jack nervous necrosis virus</name>
    <name type="common">SjNNV</name>
    <dbReference type="NCBI Taxonomy" id="35297"/>
    <lineage>
        <taxon>Viruses</taxon>
        <taxon>Riboviria</taxon>
        <taxon>Orthornavirae</taxon>
        <taxon>Kitrinoviricota</taxon>
        <taxon>Magsaviricetes</taxon>
        <taxon>Nodamuvirales</taxon>
        <taxon>Nodaviridae</taxon>
        <taxon>Betanodavirus</taxon>
    </lineage>
</organism>
<organismHost>
    <name type="scientific">Dicentrarchus labrax</name>
    <name type="common">European seabass</name>
    <name type="synonym">Morone labrax</name>
    <dbReference type="NCBI Taxonomy" id="13489"/>
</organismHost>
<organismHost>
    <name type="scientific">Epinephelus akaara</name>
    <name type="common">Hong Kong grouper</name>
    <name type="synonym">Serranus akaara</name>
    <dbReference type="NCBI Taxonomy" id="215347"/>
</organismHost>
<organismHost>
    <name type="scientific">Hippoglossus hippoglossus</name>
    <name type="common">Atlantic halibut</name>
    <name type="synonym">Pleuronectes hippoglossus</name>
    <dbReference type="NCBI Taxonomy" id="8267"/>
</organismHost>
<organismHost>
    <name type="scientific">Lates calcarifer</name>
    <name type="common">Barramundi</name>
    <name type="synonym">Holocentrus calcarifer</name>
    <dbReference type="NCBI Taxonomy" id="8187"/>
</organismHost>
<organismHost>
    <name type="scientific">Oplegnathus fasciatus</name>
    <name type="common">Barred knifejaw</name>
    <name type="synonym">Scaradon fasciatus</name>
    <dbReference type="NCBI Taxonomy" id="163134"/>
</organismHost>
<reference key="1">
    <citation type="journal article" date="2001" name="J. Gen. Virol.">
        <title>Establishment of an infectious RNA transcription system for striped jack nervous necrosis virus, the type species of the betanodaviruses.</title>
        <authorList>
            <person name="Iwamoto T."/>
            <person name="Mise K."/>
            <person name="Mori K."/>
            <person name="Arimoto M."/>
            <person name="Nakai T."/>
            <person name="Okuno T."/>
        </authorList>
    </citation>
    <scope>NUCLEOTIDE SEQUENCE [GENOMIC RNA]</scope>
</reference>
<feature type="chain" id="PRO_0000402395" description="Capsid protein alpha">
    <location>
        <begin position="1"/>
        <end position="340"/>
    </location>
</feature>
<feature type="region of interest" description="Disordered" evidence="2">
    <location>
        <begin position="1"/>
        <end position="39"/>
    </location>
</feature>
<feature type="compositionally biased region" description="Basic residues" evidence="2">
    <location>
        <begin position="22"/>
        <end position="32"/>
    </location>
</feature>
<sequence>MVRKGDKKLAKPPTTKAANSQPRRRATQRRRSGRADAPLAKASTITGFGRATNDVHISGMSRIAQAVVPAGTGTDGKIVVDSTIVPELLPRLGHAARIFQRYAVETLEFEIQPMCPANTGGGYVAGFLPDPTDNDHTFDALQATRGAVVAKWWESRTVRPQYTRTLLWTSTGKEQRLTSPGRLVLLCVGSNTDVVNVSVMCRWSVRLSVPSLETPEDTTAPITTQAPLHNDSINNGYTGFRSILLGATQLDLAPANAVFVTDKPLPIDYNLGVGDVDRAVYWHLRKKAGDTQVPAGYFDWGLWDDFNKTFTVGAPYYSDQQPRQILLPAGTLFTRVDSEN</sequence>
<name>CAPSD_SJNNV</name>
<comment type="function">
    <text evidence="1">Capsid protein alpha self-assembles to form an icosahedral procapsid with a T=3 symmetry, about 30 nm in diameter, and consisting of 60 capsid proteins trimers. The capsid encapsulates the two genomic RNAs (By similarity).</text>
</comment>
<comment type="subcellular location">
    <molecule>Capsid protein alpha</molecule>
    <subcellularLocation>
        <location evidence="3">Virion</location>
    </subcellularLocation>
</comment>
<comment type="similarity">
    <text evidence="3">Belongs to the peptidase A6 family.</text>
</comment>